<reference key="1">
    <citation type="journal article" date="2007" name="Proc. Natl. Acad. Sci. U.S.A.">
        <title>Independent sorting-out of thousands of duplicated gene pairs in two yeast species descended from a whole-genome duplication.</title>
        <authorList>
            <person name="Scannell D.R."/>
            <person name="Frank A.C."/>
            <person name="Conant G.C."/>
            <person name="Byrne K.P."/>
            <person name="Woolfit M."/>
            <person name="Wolfe K.H."/>
        </authorList>
    </citation>
    <scope>NUCLEOTIDE SEQUENCE [LARGE SCALE GENOMIC DNA]</scope>
    <source>
        <strain>ATCC 22028 / DSM 70294 / BCRC 21397 / CBS 2163 / NBRC 10782 / NRRL Y-8283 / UCD 57-17</strain>
    </source>
</reference>
<sequence length="491" mass="56840">MKNQINKLDDILLQQQHTNDYLLELVKFHNNLLHDNLTSIENLNLTRKKILDCFNDLFNLNSIIINYHGDIKLEIKNLKEIIIKFNKLNKLEIFYQNKLNQWKSSKVKQIQSASSTNNKITINCNYQPLLKTYLNQIDPDESTLSNQFNSNLSINDEKLIYTNESFTEDEDDTGDEDNDIDHSNNHTNNDEDPFLILSNIKLLENCQSTIKADINQLEFLLSNYKKDLKFIENELNSQNLKTKYNITLMQEKLDKINIKRKKLLIKIGLSKNKNLTSVLDKDEKIIIENINDFINSKINSLNDQLSNKKENSIVLNQKINLWEQVINQLNDLENSLKIYLSKNKKKKSIDYNIMIEWINDTINNLNDIIDSTDIQLLRNLIENEKKVLVQATNELKLNLTPVNSKINDSISKSINNNNNTNITTNTSINNNNNTNENSLLDSSQFQSSKNPFPNIGTSPPKISISEHIASNNSFTTFQLNNTSNDKLMKNE</sequence>
<comment type="function">
    <text evidence="1">Required for cytoplasm to vacuole transport (Cvt) vesicle formation and efficient autophagy. Plays a role in ATG protein retrieval from the pre-autophagosomal structure (PAS) and is especially required for autophagy-dependent cycling of ATG9. Also plays a role in regulation of filamentous growth (By similarity).</text>
</comment>
<comment type="subcellular location">
    <subcellularLocation>
        <location evidence="1">Cytoplasm</location>
    </subcellularLocation>
    <subcellularLocation>
        <location evidence="1">Membrane</location>
        <topology evidence="1">Peripheral membrane protein</topology>
    </subcellularLocation>
</comment>
<comment type="similarity">
    <text evidence="4">Belongs to the ATG23 family.</text>
</comment>
<feature type="chain" id="PRO_0000318037" description="Autophagy-related protein 23">
    <location>
        <begin position="1"/>
        <end position="491"/>
    </location>
</feature>
<feature type="region of interest" description="Disordered" evidence="3">
    <location>
        <begin position="167"/>
        <end position="188"/>
    </location>
</feature>
<feature type="region of interest" description="Disordered" evidence="3">
    <location>
        <begin position="412"/>
        <end position="457"/>
    </location>
</feature>
<feature type="coiled-coil region" evidence="2">
    <location>
        <begin position="287"/>
        <end position="397"/>
    </location>
</feature>
<feature type="compositionally biased region" description="Acidic residues" evidence="3">
    <location>
        <begin position="167"/>
        <end position="179"/>
    </location>
</feature>
<feature type="compositionally biased region" description="Low complexity" evidence="3">
    <location>
        <begin position="412"/>
        <end position="443"/>
    </location>
</feature>
<feature type="compositionally biased region" description="Polar residues" evidence="3">
    <location>
        <begin position="444"/>
        <end position="457"/>
    </location>
</feature>
<gene>
    <name type="primary">ATG23</name>
    <name type="ORF">Kpol_520p42</name>
</gene>
<name>ATG23_VANPO</name>
<organism>
    <name type="scientific">Vanderwaltozyma polyspora (strain ATCC 22028 / DSM 70294 / BCRC 21397 / CBS 2163 / NBRC 10782 / NRRL Y-8283 / UCD 57-17)</name>
    <name type="common">Kluyveromyces polysporus</name>
    <dbReference type="NCBI Taxonomy" id="436907"/>
    <lineage>
        <taxon>Eukaryota</taxon>
        <taxon>Fungi</taxon>
        <taxon>Dikarya</taxon>
        <taxon>Ascomycota</taxon>
        <taxon>Saccharomycotina</taxon>
        <taxon>Saccharomycetes</taxon>
        <taxon>Saccharomycetales</taxon>
        <taxon>Saccharomycetaceae</taxon>
        <taxon>Vanderwaltozyma</taxon>
    </lineage>
</organism>
<proteinExistence type="inferred from homology"/>
<dbReference type="EMBL" id="DS480421">
    <property type="protein sequence ID" value="EDO16619.1"/>
    <property type="molecule type" value="Genomic_DNA"/>
</dbReference>
<dbReference type="RefSeq" id="XP_001644477.1">
    <property type="nucleotide sequence ID" value="XM_001644427.1"/>
</dbReference>
<dbReference type="SMR" id="A7TMC5"/>
<dbReference type="FunCoup" id="A7TMC5">
    <property type="interactions" value="126"/>
</dbReference>
<dbReference type="STRING" id="436907.A7TMC5"/>
<dbReference type="GeneID" id="5544782"/>
<dbReference type="KEGG" id="vpo:Kpol_520p42"/>
<dbReference type="eggNOG" id="ENOG502RZQ0">
    <property type="taxonomic scope" value="Eukaryota"/>
</dbReference>
<dbReference type="HOGENOM" id="CLU_555738_0_0_1"/>
<dbReference type="InParanoid" id="A7TMC5"/>
<dbReference type="OMA" id="DLCRIND"/>
<dbReference type="OrthoDB" id="4066450at2759"/>
<dbReference type="PhylomeDB" id="A7TMC5"/>
<dbReference type="Proteomes" id="UP000000267">
    <property type="component" value="Unassembled WGS sequence"/>
</dbReference>
<dbReference type="GO" id="GO:0005737">
    <property type="term" value="C:cytoplasm"/>
    <property type="evidence" value="ECO:0007669"/>
    <property type="project" value="UniProtKB-SubCell"/>
</dbReference>
<dbReference type="GO" id="GO:0016020">
    <property type="term" value="C:membrane"/>
    <property type="evidence" value="ECO:0007669"/>
    <property type="project" value="UniProtKB-SubCell"/>
</dbReference>
<dbReference type="GO" id="GO:0006914">
    <property type="term" value="P:autophagy"/>
    <property type="evidence" value="ECO:0007669"/>
    <property type="project" value="UniProtKB-KW"/>
</dbReference>
<dbReference type="GO" id="GO:0015031">
    <property type="term" value="P:protein transport"/>
    <property type="evidence" value="ECO:0007669"/>
    <property type="project" value="UniProtKB-KW"/>
</dbReference>
<keyword id="KW-0072">Autophagy</keyword>
<keyword id="KW-0175">Coiled coil</keyword>
<keyword id="KW-0963">Cytoplasm</keyword>
<keyword id="KW-0472">Membrane</keyword>
<keyword id="KW-0653">Protein transport</keyword>
<keyword id="KW-1185">Reference proteome</keyword>
<keyword id="KW-0813">Transport</keyword>
<protein>
    <recommendedName>
        <fullName>Autophagy-related protein 23</fullName>
    </recommendedName>
</protein>
<accession>A7TMC5</accession>
<evidence type="ECO:0000250" key="1"/>
<evidence type="ECO:0000255" key="2"/>
<evidence type="ECO:0000256" key="3">
    <source>
        <dbReference type="SAM" id="MobiDB-lite"/>
    </source>
</evidence>
<evidence type="ECO:0000305" key="4"/>